<gene>
    <name evidence="1" type="primary">truD</name>
    <name type="ordered locus">ECED1_3201</name>
</gene>
<dbReference type="EC" id="5.4.99.27" evidence="1"/>
<dbReference type="EMBL" id="CU928162">
    <property type="protein sequence ID" value="CAR09363.2"/>
    <property type="molecule type" value="Genomic_DNA"/>
</dbReference>
<dbReference type="RefSeq" id="WP_000568932.1">
    <property type="nucleotide sequence ID" value="NC_011745.1"/>
</dbReference>
<dbReference type="SMR" id="B7MZ46"/>
<dbReference type="KEGG" id="ecq:ECED1_3201"/>
<dbReference type="HOGENOM" id="CLU_005281_4_0_6"/>
<dbReference type="Proteomes" id="UP000000748">
    <property type="component" value="Chromosome"/>
</dbReference>
<dbReference type="GO" id="GO:0005829">
    <property type="term" value="C:cytosol"/>
    <property type="evidence" value="ECO:0007669"/>
    <property type="project" value="TreeGrafter"/>
</dbReference>
<dbReference type="GO" id="GO:0003723">
    <property type="term" value="F:RNA binding"/>
    <property type="evidence" value="ECO:0007669"/>
    <property type="project" value="InterPro"/>
</dbReference>
<dbReference type="GO" id="GO:0160150">
    <property type="term" value="F:tRNA pseudouridine(13) synthase activity"/>
    <property type="evidence" value="ECO:0007669"/>
    <property type="project" value="UniProtKB-EC"/>
</dbReference>
<dbReference type="GO" id="GO:0031119">
    <property type="term" value="P:tRNA pseudouridine synthesis"/>
    <property type="evidence" value="ECO:0007669"/>
    <property type="project" value="UniProtKB-UniRule"/>
</dbReference>
<dbReference type="CDD" id="cd02575">
    <property type="entry name" value="PseudoU_synth_EcTruD"/>
    <property type="match status" value="1"/>
</dbReference>
<dbReference type="FunFam" id="3.30.2340.10:FF:000001">
    <property type="entry name" value="tRNA pseudouridine synthase D"/>
    <property type="match status" value="1"/>
</dbReference>
<dbReference type="FunFam" id="3.30.2350.20:FF:000001">
    <property type="entry name" value="tRNA pseudouridine synthase D"/>
    <property type="match status" value="1"/>
</dbReference>
<dbReference type="Gene3D" id="3.30.2350.20">
    <property type="entry name" value="TruD, catalytic domain"/>
    <property type="match status" value="1"/>
</dbReference>
<dbReference type="Gene3D" id="3.30.2340.10">
    <property type="entry name" value="TruD, insertion domain"/>
    <property type="match status" value="1"/>
</dbReference>
<dbReference type="HAMAP" id="MF_01082">
    <property type="entry name" value="TruD"/>
    <property type="match status" value="1"/>
</dbReference>
<dbReference type="InterPro" id="IPR020103">
    <property type="entry name" value="PsdUridine_synth_cat_dom_sf"/>
</dbReference>
<dbReference type="InterPro" id="IPR001656">
    <property type="entry name" value="PsdUridine_synth_TruD"/>
</dbReference>
<dbReference type="InterPro" id="IPR020119">
    <property type="entry name" value="PsdUridine_synth_TruD_CS"/>
</dbReference>
<dbReference type="InterPro" id="IPR011760">
    <property type="entry name" value="PsdUridine_synth_TruD_insert"/>
</dbReference>
<dbReference type="InterPro" id="IPR042214">
    <property type="entry name" value="TruD_catalytic"/>
</dbReference>
<dbReference type="InterPro" id="IPR043165">
    <property type="entry name" value="TruD_insert_sf"/>
</dbReference>
<dbReference type="InterPro" id="IPR050170">
    <property type="entry name" value="TruD_pseudoU_synthase"/>
</dbReference>
<dbReference type="NCBIfam" id="NF002155">
    <property type="entry name" value="PRK00984.1-4"/>
    <property type="match status" value="1"/>
</dbReference>
<dbReference type="NCBIfam" id="TIGR00094">
    <property type="entry name" value="tRNA_TruD_broad"/>
    <property type="match status" value="1"/>
</dbReference>
<dbReference type="PANTHER" id="PTHR47811">
    <property type="entry name" value="TRNA PSEUDOURIDINE SYNTHASE D"/>
    <property type="match status" value="1"/>
</dbReference>
<dbReference type="PANTHER" id="PTHR47811:SF1">
    <property type="entry name" value="TRNA PSEUDOURIDINE SYNTHASE D"/>
    <property type="match status" value="1"/>
</dbReference>
<dbReference type="Pfam" id="PF01142">
    <property type="entry name" value="TruD"/>
    <property type="match status" value="2"/>
</dbReference>
<dbReference type="SUPFAM" id="SSF55120">
    <property type="entry name" value="Pseudouridine synthase"/>
    <property type="match status" value="1"/>
</dbReference>
<dbReference type="PROSITE" id="PS50984">
    <property type="entry name" value="TRUD"/>
    <property type="match status" value="1"/>
</dbReference>
<dbReference type="PROSITE" id="PS01268">
    <property type="entry name" value="UPF0024"/>
    <property type="match status" value="1"/>
</dbReference>
<sequence>MIEFDNLTYLHGKPQGTGLLKANPEDFVVVEDLGFEPDGEGEHILVRILKNGCNTRFVADALAKFLKIHAREVSFAGQKDKHAVTEQWLCARVPGKEMPDLSAFQLEGCQVLEYARHKRKLRLGALKGNAFTLVLREVSNRDDVEQRLIDICVKGVPNYFGAQRFGIGGSNLQGALRWAQTNTPVRDRNKRSFWLSAARSALFNQIVAERLKKADVNQVVDGDALQLAGRGSWFVATTEELAELQRRVNDKVLMITAVLPGSGEWGTQREALAFEQAAVAEETELQTLLVREKVEAARRAMLLYPQQLSWNWWDDVTVEIRFWLPAGSFATSVVRELINTTGDYAHIAE</sequence>
<reference key="1">
    <citation type="journal article" date="2009" name="PLoS Genet.">
        <title>Organised genome dynamics in the Escherichia coli species results in highly diverse adaptive paths.</title>
        <authorList>
            <person name="Touchon M."/>
            <person name="Hoede C."/>
            <person name="Tenaillon O."/>
            <person name="Barbe V."/>
            <person name="Baeriswyl S."/>
            <person name="Bidet P."/>
            <person name="Bingen E."/>
            <person name="Bonacorsi S."/>
            <person name="Bouchier C."/>
            <person name="Bouvet O."/>
            <person name="Calteau A."/>
            <person name="Chiapello H."/>
            <person name="Clermont O."/>
            <person name="Cruveiller S."/>
            <person name="Danchin A."/>
            <person name="Diard M."/>
            <person name="Dossat C."/>
            <person name="Karoui M.E."/>
            <person name="Frapy E."/>
            <person name="Garry L."/>
            <person name="Ghigo J.M."/>
            <person name="Gilles A.M."/>
            <person name="Johnson J."/>
            <person name="Le Bouguenec C."/>
            <person name="Lescat M."/>
            <person name="Mangenot S."/>
            <person name="Martinez-Jehanne V."/>
            <person name="Matic I."/>
            <person name="Nassif X."/>
            <person name="Oztas S."/>
            <person name="Petit M.A."/>
            <person name="Pichon C."/>
            <person name="Rouy Z."/>
            <person name="Ruf C.S."/>
            <person name="Schneider D."/>
            <person name="Tourret J."/>
            <person name="Vacherie B."/>
            <person name="Vallenet D."/>
            <person name="Medigue C."/>
            <person name="Rocha E.P.C."/>
            <person name="Denamur E."/>
        </authorList>
    </citation>
    <scope>NUCLEOTIDE SEQUENCE [LARGE SCALE GENOMIC DNA]</scope>
    <source>
        <strain>ED1a</strain>
    </source>
</reference>
<protein>
    <recommendedName>
        <fullName evidence="1">tRNA pseudouridine synthase D</fullName>
        <ecNumber evidence="1">5.4.99.27</ecNumber>
    </recommendedName>
    <alternativeName>
        <fullName evidence="1">tRNA pseudouridine(13) synthase</fullName>
    </alternativeName>
    <alternativeName>
        <fullName evidence="1">tRNA pseudouridylate synthase D</fullName>
    </alternativeName>
    <alternativeName>
        <fullName evidence="1">tRNA-uridine isomerase D</fullName>
    </alternativeName>
</protein>
<feature type="chain" id="PRO_1000149844" description="tRNA pseudouridine synthase D">
    <location>
        <begin position="1"/>
        <end position="349"/>
    </location>
</feature>
<feature type="domain" description="TRUD" evidence="1">
    <location>
        <begin position="155"/>
        <end position="303"/>
    </location>
</feature>
<feature type="active site" description="Nucleophile" evidence="1">
    <location>
        <position position="80"/>
    </location>
</feature>
<feature type="binding site" evidence="1">
    <location>
        <position position="27"/>
    </location>
    <ligand>
        <name>substrate</name>
    </ligand>
</feature>
<feature type="binding site" evidence="1">
    <location>
        <position position="129"/>
    </location>
    <ligand>
        <name>substrate</name>
    </ligand>
</feature>
<feature type="binding site" evidence="1">
    <location>
        <position position="329"/>
    </location>
    <ligand>
        <name>substrate</name>
    </ligand>
</feature>
<evidence type="ECO:0000255" key="1">
    <source>
        <dbReference type="HAMAP-Rule" id="MF_01082"/>
    </source>
</evidence>
<organism>
    <name type="scientific">Escherichia coli O81 (strain ED1a)</name>
    <dbReference type="NCBI Taxonomy" id="585397"/>
    <lineage>
        <taxon>Bacteria</taxon>
        <taxon>Pseudomonadati</taxon>
        <taxon>Pseudomonadota</taxon>
        <taxon>Gammaproteobacteria</taxon>
        <taxon>Enterobacterales</taxon>
        <taxon>Enterobacteriaceae</taxon>
        <taxon>Escherichia</taxon>
    </lineage>
</organism>
<comment type="function">
    <text evidence="1">Responsible for synthesis of pseudouridine from uracil-13 in transfer RNAs.</text>
</comment>
<comment type="catalytic activity">
    <reaction evidence="1">
        <text>uridine(13) in tRNA = pseudouridine(13) in tRNA</text>
        <dbReference type="Rhea" id="RHEA:42540"/>
        <dbReference type="Rhea" id="RHEA-COMP:10105"/>
        <dbReference type="Rhea" id="RHEA-COMP:10106"/>
        <dbReference type="ChEBI" id="CHEBI:65314"/>
        <dbReference type="ChEBI" id="CHEBI:65315"/>
        <dbReference type="EC" id="5.4.99.27"/>
    </reaction>
</comment>
<comment type="similarity">
    <text evidence="1">Belongs to the pseudouridine synthase TruD family.</text>
</comment>
<keyword id="KW-0413">Isomerase</keyword>
<keyword id="KW-0819">tRNA processing</keyword>
<proteinExistence type="inferred from homology"/>
<name>TRUD_ECO81</name>
<accession>B7MZ46</accession>